<comment type="similarity">
    <text evidence="2">To phage T3 and T7 N-acetylmuramoyl-L-alanine amidases.</text>
</comment>
<reference key="1">
    <citation type="journal article" date="1995" name="Science">
        <title>Whole-genome random sequencing and assembly of Haemophilus influenzae Rd.</title>
        <authorList>
            <person name="Fleischmann R.D."/>
            <person name="Adams M.D."/>
            <person name="White O."/>
            <person name="Clayton R.A."/>
            <person name="Kirkness E.F."/>
            <person name="Kerlavage A.R."/>
            <person name="Bult C.J."/>
            <person name="Tomb J.-F."/>
            <person name="Dougherty B.A."/>
            <person name="Merrick J.M."/>
            <person name="McKenney K."/>
            <person name="Sutton G.G."/>
            <person name="FitzHugh W."/>
            <person name="Fields C.A."/>
            <person name="Gocayne J.D."/>
            <person name="Scott J.D."/>
            <person name="Shirley R."/>
            <person name="Liu L.-I."/>
            <person name="Glodek A."/>
            <person name="Kelley J.M."/>
            <person name="Weidman J.F."/>
            <person name="Phillips C.A."/>
            <person name="Spriggs T."/>
            <person name="Hedblom E."/>
            <person name="Cotton M.D."/>
            <person name="Utterback T.R."/>
            <person name="Hanna M.C."/>
            <person name="Nguyen D.T."/>
            <person name="Saudek D.M."/>
            <person name="Brandon R.C."/>
            <person name="Fine L.D."/>
            <person name="Fritchman J.L."/>
            <person name="Fuhrmann J.L."/>
            <person name="Geoghagen N.S.M."/>
            <person name="Gnehm C.L."/>
            <person name="McDonald L.A."/>
            <person name="Small K.V."/>
            <person name="Fraser C.M."/>
            <person name="Smith H.O."/>
            <person name="Venter J.C."/>
        </authorList>
    </citation>
    <scope>NUCLEOTIDE SEQUENCE [LARGE SCALE GENOMIC DNA]</scope>
    <source>
        <strain>ATCC 51907 / DSM 11121 / KW20 / Rd</strain>
    </source>
</reference>
<gene>
    <name type="ordered locus">HI_1494</name>
</gene>
<feature type="chain" id="PRO_0000078075" description="Uncharacterized protein HI_1494">
    <location>
        <begin position="1"/>
        <end position="116"/>
    </location>
</feature>
<feature type="domain" description="N-acetylmuramoyl-L-alanine amidase" evidence="1">
    <location>
        <begin position="2"/>
        <end position="73"/>
    </location>
</feature>
<keyword id="KW-1185">Reference proteome</keyword>
<dbReference type="EMBL" id="L42023">
    <property type="protein sequence ID" value="AAC23136.1"/>
    <property type="molecule type" value="Genomic_DNA"/>
</dbReference>
<dbReference type="PIR" id="G64126">
    <property type="entry name" value="G64126"/>
</dbReference>
<dbReference type="SMR" id="O05071"/>
<dbReference type="STRING" id="71421.HI_1494"/>
<dbReference type="EnsemblBacteria" id="AAC23136">
    <property type="protein sequence ID" value="AAC23136"/>
    <property type="gene ID" value="HI_1494"/>
</dbReference>
<dbReference type="KEGG" id="hin:HI_1494"/>
<dbReference type="eggNOG" id="COG3023">
    <property type="taxonomic scope" value="Bacteria"/>
</dbReference>
<dbReference type="HOGENOM" id="CLU_079366_4_0_6"/>
<dbReference type="Proteomes" id="UP000000579">
    <property type="component" value="Chromosome"/>
</dbReference>
<dbReference type="GO" id="GO:0008745">
    <property type="term" value="F:N-acetylmuramoyl-L-alanine amidase activity"/>
    <property type="evidence" value="ECO:0007669"/>
    <property type="project" value="InterPro"/>
</dbReference>
<dbReference type="GO" id="GO:0009253">
    <property type="term" value="P:peptidoglycan catabolic process"/>
    <property type="evidence" value="ECO:0007669"/>
    <property type="project" value="InterPro"/>
</dbReference>
<dbReference type="CDD" id="cd06583">
    <property type="entry name" value="PGRP"/>
    <property type="match status" value="1"/>
</dbReference>
<dbReference type="Gene3D" id="3.40.80.10">
    <property type="entry name" value="Peptidoglycan recognition protein-like"/>
    <property type="match status" value="1"/>
</dbReference>
<dbReference type="InterPro" id="IPR036505">
    <property type="entry name" value="Amidase/PGRP_sf"/>
</dbReference>
<dbReference type="InterPro" id="IPR002502">
    <property type="entry name" value="Amidase_domain"/>
</dbReference>
<dbReference type="InterPro" id="IPR018247">
    <property type="entry name" value="EF_Hand_1_Ca_BS"/>
</dbReference>
<dbReference type="Pfam" id="PF01510">
    <property type="entry name" value="Amidase_2"/>
    <property type="match status" value="1"/>
</dbReference>
<dbReference type="SUPFAM" id="SSF55846">
    <property type="entry name" value="N-acetylmuramoyl-L-alanine amidase-like"/>
    <property type="match status" value="1"/>
</dbReference>
<protein>
    <recommendedName>
        <fullName>Uncharacterized protein HI_1494</fullName>
    </recommendedName>
</protein>
<organism>
    <name type="scientific">Haemophilus influenzae (strain ATCC 51907 / DSM 11121 / KW20 / Rd)</name>
    <dbReference type="NCBI Taxonomy" id="71421"/>
    <lineage>
        <taxon>Bacteria</taxon>
        <taxon>Pseudomonadati</taxon>
        <taxon>Pseudomonadota</taxon>
        <taxon>Gammaproteobacteria</taxon>
        <taxon>Pasteurellales</taxon>
        <taxon>Pasteurellaceae</taxon>
        <taxon>Haemophilus</taxon>
    </lineage>
</organism>
<accession>O05071</accession>
<sequence>MDGSVGTGRQVGEIGAHVKGHNQNSVGICLVGGITASGKNHGEYTEAQWQSLYKLLQELEAEHPKALICGHRDLSPDLNGDGVITPKEWLKDCPCFDVWSWLDSEQVVNLDHLYKE</sequence>
<evidence type="ECO:0000255" key="1"/>
<evidence type="ECO:0000305" key="2"/>
<name>Y1494_HAEIN</name>
<proteinExistence type="predicted"/>